<evidence type="ECO:0000305" key="1"/>
<sequence>MVNTQNQISQTSELDYIVNQPYKYGFKTSVESEQFPRGISEDIVRLISKKKDEPEYLLNFRLKAYKKWKKMSSPSWAHIKHPNIDFNTIIYYAVPKLKKELKSLDEVDPEILDTFNKLGISLNEQKRISNVAVDAVFDSVSIATTFKKELSEAGVIFCSISEAIRDYPELIKKYLGTVVPAGDNYFAALNSAVFSDGSFCYIPPNTVCPLELSTYFRINNEESGQFERTLIIADRGSKVSYLEGCTAPQFDTNQLHAAIVELVALEGAEIKYSTVQNWYAGNKEGKGGIYNFVTKRGLCSGNNSKISWTQVETGSAITWKYPSCILAGENSQGEFYSVALTNNYQEADTGTKMIHIGNNTKSRIISKGISAGRSKNSYRGLVKVGPQSFNSRNYSQCDSLLIGQSSQANTFPYIQVQNPTSKVEHEASTSKISEDQIFYFLQRGINLEESIALMISGFCKDVFNELPMEFATEADRLLSLKLEGTVG</sequence>
<accession>Q1XDP7</accession>
<gene>
    <name type="primary">ycf24</name>
</gene>
<protein>
    <recommendedName>
        <fullName>Iron-sulfur cluster assembly SufBD family protein ycf24</fullName>
    </recommendedName>
</protein>
<reference key="1">
    <citation type="submission" date="2003-11" db="EMBL/GenBank/DDBJ databases">
        <title>Whole genome sequence of Porphyra yezoensis chloroplast.</title>
        <authorList>
            <person name="Kunimoto M."/>
            <person name="Morishima K."/>
            <person name="Yoshikawa M."/>
            <person name="Fukuda S."/>
            <person name="Kobayashi T."/>
            <person name="Kobayashi M."/>
            <person name="Okazaki T."/>
            <person name="Ohara I."/>
            <person name="Nakayama I."/>
        </authorList>
    </citation>
    <scope>NUCLEOTIDE SEQUENCE [LARGE SCALE GENOMIC DNA]</scope>
    <source>
        <strain>U-51</strain>
    </source>
</reference>
<comment type="subcellular location">
    <subcellularLocation>
        <location>Plastid</location>
        <location>Chloroplast</location>
    </subcellularLocation>
</comment>
<comment type="similarity">
    <text evidence="1">Belongs to the iron-sulfur cluster assembly SufBD family.</text>
</comment>
<feature type="chain" id="PRO_0000277351" description="Iron-sulfur cluster assembly SufBD family protein ycf24">
    <location>
        <begin position="1"/>
        <end position="487"/>
    </location>
</feature>
<name>YCF24_PYRYE</name>
<keyword id="KW-0150">Chloroplast</keyword>
<keyword id="KW-0934">Plastid</keyword>
<dbReference type="EMBL" id="AP006715">
    <property type="protein sequence ID" value="BAE92364.1"/>
    <property type="molecule type" value="Genomic_DNA"/>
</dbReference>
<dbReference type="RefSeq" id="YP_536921.1">
    <property type="nucleotide sequence ID" value="NC_007932.1"/>
</dbReference>
<dbReference type="SMR" id="Q1XDP7"/>
<dbReference type="GeneID" id="3978968"/>
<dbReference type="GO" id="GO:0009507">
    <property type="term" value="C:chloroplast"/>
    <property type="evidence" value="ECO:0007669"/>
    <property type="project" value="UniProtKB-SubCell"/>
</dbReference>
<dbReference type="GO" id="GO:0016226">
    <property type="term" value="P:iron-sulfur cluster assembly"/>
    <property type="evidence" value="ECO:0007669"/>
    <property type="project" value="InterPro"/>
</dbReference>
<dbReference type="InterPro" id="IPR055346">
    <property type="entry name" value="Fe-S_cluster_assembly_SufBD"/>
</dbReference>
<dbReference type="InterPro" id="IPR010231">
    <property type="entry name" value="SUF_FeS_clus_asmbl_SufB"/>
</dbReference>
<dbReference type="InterPro" id="IPR000825">
    <property type="entry name" value="SUF_FeS_clus_asmbl_SufBD_core"/>
</dbReference>
<dbReference type="InterPro" id="IPR037284">
    <property type="entry name" value="SUF_FeS_clus_asmbl_SufBD_sf"/>
</dbReference>
<dbReference type="InterPro" id="IPR045595">
    <property type="entry name" value="SufBD_N"/>
</dbReference>
<dbReference type="NCBIfam" id="NF008773">
    <property type="entry name" value="PRK11814.1"/>
    <property type="match status" value="1"/>
</dbReference>
<dbReference type="NCBIfam" id="TIGR01980">
    <property type="entry name" value="sufB"/>
    <property type="match status" value="1"/>
</dbReference>
<dbReference type="PANTHER" id="PTHR30508">
    <property type="entry name" value="FES CLUSTER ASSEMBLY PROTEIN SUF"/>
    <property type="match status" value="1"/>
</dbReference>
<dbReference type="PANTHER" id="PTHR30508:SF1">
    <property type="entry name" value="UPF0051 PROTEIN ABCI8, CHLOROPLASTIC-RELATED"/>
    <property type="match status" value="1"/>
</dbReference>
<dbReference type="Pfam" id="PF01458">
    <property type="entry name" value="SUFBD_core"/>
    <property type="match status" value="1"/>
</dbReference>
<dbReference type="Pfam" id="PF19295">
    <property type="entry name" value="SufBD_N"/>
    <property type="match status" value="1"/>
</dbReference>
<dbReference type="SUPFAM" id="SSF101960">
    <property type="entry name" value="Stabilizer of iron transporter SufD"/>
    <property type="match status" value="1"/>
</dbReference>
<proteinExistence type="inferred from homology"/>
<organism>
    <name type="scientific">Pyropia yezoensis</name>
    <name type="common">Susabi-nori</name>
    <name type="synonym">Porphyra yezoensis</name>
    <dbReference type="NCBI Taxonomy" id="2788"/>
    <lineage>
        <taxon>Eukaryota</taxon>
        <taxon>Rhodophyta</taxon>
        <taxon>Bangiophyceae</taxon>
        <taxon>Bangiales</taxon>
        <taxon>Bangiaceae</taxon>
        <taxon>Pyropia</taxon>
    </lineage>
</organism>
<geneLocation type="chloroplast"/>